<feature type="chain" id="PRO_0000080556" description="Beta-1,4-glucuronyltransferase 1">
    <location>
        <begin position="1"/>
        <end position="415"/>
    </location>
</feature>
<feature type="topological domain" description="Cytoplasmic" evidence="2">
    <location>
        <begin position="1"/>
        <end position="8"/>
    </location>
</feature>
<feature type="transmembrane region" description="Helical; Signal-anchor for type II membrane protein" evidence="2">
    <location>
        <begin position="9"/>
        <end position="36"/>
    </location>
</feature>
<feature type="topological domain" description="Lumenal" evidence="2">
    <location>
        <begin position="37"/>
        <end position="415"/>
    </location>
</feature>
<feature type="binding site" evidence="1">
    <location>
        <position position="227"/>
    </location>
    <ligand>
        <name>Mn(2+)</name>
        <dbReference type="ChEBI" id="CHEBI:29035"/>
    </ligand>
</feature>
<feature type="binding site" evidence="1">
    <location>
        <position position="229"/>
    </location>
    <ligand>
        <name>Mn(2+)</name>
        <dbReference type="ChEBI" id="CHEBI:29035"/>
    </ligand>
</feature>
<feature type="glycosylation site" description="N-linked (GlcNAc...) asparagine" evidence="2">
    <location>
        <position position="204"/>
    </location>
</feature>
<feature type="glycosylation site" description="N-linked (GlcNAc...) asparagine" evidence="2">
    <location>
        <position position="300"/>
    </location>
</feature>
<feature type="splice variant" id="VSP_014004" description="In isoform 2." evidence="5">
    <original>ACELHVAGFNFEVLNEGFLVHKGFKEA</original>
    <variation>VLKRERACRTKTGGVSGVKWPLVERRQ</variation>
    <location>
        <begin position="353"/>
        <end position="379"/>
    </location>
</feature>
<feature type="splice variant" id="VSP_014005" description="In isoform 2." evidence="5">
    <location>
        <begin position="380"/>
        <end position="415"/>
    </location>
</feature>
<feature type="mutagenesis site" description="Mild muscular dystrophy phenotype of variable penetrance due to defects in axon guidance. Mislocalization to the endoplasmic reticulum." evidence="3">
    <original>M</original>
    <variation>T</variation>
    <location>
        <position position="155"/>
    </location>
</feature>
<feature type="sequence conflict" description="In Ref. 2; AAH02191." evidence="6" ref="2">
    <original>EF</original>
    <variation>RV</variation>
    <location>
        <begin position="175"/>
        <end position="176"/>
    </location>
</feature>
<accession>Q8BWP8</accession>
<accession>Q3TY43</accession>
<accession>Q8BJH9</accession>
<accession>Q99LW7</accession>
<reference key="1">
    <citation type="journal article" date="2005" name="Science">
        <title>The transcriptional landscape of the mammalian genome.</title>
        <authorList>
            <person name="Carninci P."/>
            <person name="Kasukawa T."/>
            <person name="Katayama S."/>
            <person name="Gough J."/>
            <person name="Frith M.C."/>
            <person name="Maeda N."/>
            <person name="Oyama R."/>
            <person name="Ravasi T."/>
            <person name="Lenhard B."/>
            <person name="Wells C."/>
            <person name="Kodzius R."/>
            <person name="Shimokawa K."/>
            <person name="Bajic V.B."/>
            <person name="Brenner S.E."/>
            <person name="Batalov S."/>
            <person name="Forrest A.R."/>
            <person name="Zavolan M."/>
            <person name="Davis M.J."/>
            <person name="Wilming L.G."/>
            <person name="Aidinis V."/>
            <person name="Allen J.E."/>
            <person name="Ambesi-Impiombato A."/>
            <person name="Apweiler R."/>
            <person name="Aturaliya R.N."/>
            <person name="Bailey T.L."/>
            <person name="Bansal M."/>
            <person name="Baxter L."/>
            <person name="Beisel K.W."/>
            <person name="Bersano T."/>
            <person name="Bono H."/>
            <person name="Chalk A.M."/>
            <person name="Chiu K.P."/>
            <person name="Choudhary V."/>
            <person name="Christoffels A."/>
            <person name="Clutterbuck D.R."/>
            <person name="Crowe M.L."/>
            <person name="Dalla E."/>
            <person name="Dalrymple B.P."/>
            <person name="de Bono B."/>
            <person name="Della Gatta G."/>
            <person name="di Bernardo D."/>
            <person name="Down T."/>
            <person name="Engstrom P."/>
            <person name="Fagiolini M."/>
            <person name="Faulkner G."/>
            <person name="Fletcher C.F."/>
            <person name="Fukushima T."/>
            <person name="Furuno M."/>
            <person name="Futaki S."/>
            <person name="Gariboldi M."/>
            <person name="Georgii-Hemming P."/>
            <person name="Gingeras T.R."/>
            <person name="Gojobori T."/>
            <person name="Green R.E."/>
            <person name="Gustincich S."/>
            <person name="Harbers M."/>
            <person name="Hayashi Y."/>
            <person name="Hensch T.K."/>
            <person name="Hirokawa N."/>
            <person name="Hill D."/>
            <person name="Huminiecki L."/>
            <person name="Iacono M."/>
            <person name="Ikeo K."/>
            <person name="Iwama A."/>
            <person name="Ishikawa T."/>
            <person name="Jakt M."/>
            <person name="Kanapin A."/>
            <person name="Katoh M."/>
            <person name="Kawasawa Y."/>
            <person name="Kelso J."/>
            <person name="Kitamura H."/>
            <person name="Kitano H."/>
            <person name="Kollias G."/>
            <person name="Krishnan S.P."/>
            <person name="Kruger A."/>
            <person name="Kummerfeld S.K."/>
            <person name="Kurochkin I.V."/>
            <person name="Lareau L.F."/>
            <person name="Lazarevic D."/>
            <person name="Lipovich L."/>
            <person name="Liu J."/>
            <person name="Liuni S."/>
            <person name="McWilliam S."/>
            <person name="Madan Babu M."/>
            <person name="Madera M."/>
            <person name="Marchionni L."/>
            <person name="Matsuda H."/>
            <person name="Matsuzawa S."/>
            <person name="Miki H."/>
            <person name="Mignone F."/>
            <person name="Miyake S."/>
            <person name="Morris K."/>
            <person name="Mottagui-Tabar S."/>
            <person name="Mulder N."/>
            <person name="Nakano N."/>
            <person name="Nakauchi H."/>
            <person name="Ng P."/>
            <person name="Nilsson R."/>
            <person name="Nishiguchi S."/>
            <person name="Nishikawa S."/>
            <person name="Nori F."/>
            <person name="Ohara O."/>
            <person name="Okazaki Y."/>
            <person name="Orlando V."/>
            <person name="Pang K.C."/>
            <person name="Pavan W.J."/>
            <person name="Pavesi G."/>
            <person name="Pesole G."/>
            <person name="Petrovsky N."/>
            <person name="Piazza S."/>
            <person name="Reed J."/>
            <person name="Reid J.F."/>
            <person name="Ring B.Z."/>
            <person name="Ringwald M."/>
            <person name="Rost B."/>
            <person name="Ruan Y."/>
            <person name="Salzberg S.L."/>
            <person name="Sandelin A."/>
            <person name="Schneider C."/>
            <person name="Schoenbach C."/>
            <person name="Sekiguchi K."/>
            <person name="Semple C.A."/>
            <person name="Seno S."/>
            <person name="Sessa L."/>
            <person name="Sheng Y."/>
            <person name="Shibata Y."/>
            <person name="Shimada H."/>
            <person name="Shimada K."/>
            <person name="Silva D."/>
            <person name="Sinclair B."/>
            <person name="Sperling S."/>
            <person name="Stupka E."/>
            <person name="Sugiura K."/>
            <person name="Sultana R."/>
            <person name="Takenaka Y."/>
            <person name="Taki K."/>
            <person name="Tammoja K."/>
            <person name="Tan S.L."/>
            <person name="Tang S."/>
            <person name="Taylor M.S."/>
            <person name="Tegner J."/>
            <person name="Teichmann S.A."/>
            <person name="Ueda H.R."/>
            <person name="van Nimwegen E."/>
            <person name="Verardo R."/>
            <person name="Wei C.L."/>
            <person name="Yagi K."/>
            <person name="Yamanishi H."/>
            <person name="Zabarovsky E."/>
            <person name="Zhu S."/>
            <person name="Zimmer A."/>
            <person name="Hide W."/>
            <person name="Bult C."/>
            <person name="Grimmond S.M."/>
            <person name="Teasdale R.D."/>
            <person name="Liu E.T."/>
            <person name="Brusic V."/>
            <person name="Quackenbush J."/>
            <person name="Wahlestedt C."/>
            <person name="Mattick J.S."/>
            <person name="Hume D.A."/>
            <person name="Kai C."/>
            <person name="Sasaki D."/>
            <person name="Tomaru Y."/>
            <person name="Fukuda S."/>
            <person name="Kanamori-Katayama M."/>
            <person name="Suzuki M."/>
            <person name="Aoki J."/>
            <person name="Arakawa T."/>
            <person name="Iida J."/>
            <person name="Imamura K."/>
            <person name="Itoh M."/>
            <person name="Kato T."/>
            <person name="Kawaji H."/>
            <person name="Kawagashira N."/>
            <person name="Kawashima T."/>
            <person name="Kojima M."/>
            <person name="Kondo S."/>
            <person name="Konno H."/>
            <person name="Nakano K."/>
            <person name="Ninomiya N."/>
            <person name="Nishio T."/>
            <person name="Okada M."/>
            <person name="Plessy C."/>
            <person name="Shibata K."/>
            <person name="Shiraki T."/>
            <person name="Suzuki S."/>
            <person name="Tagami M."/>
            <person name="Waki K."/>
            <person name="Watahiki A."/>
            <person name="Okamura-Oho Y."/>
            <person name="Suzuki H."/>
            <person name="Kawai J."/>
            <person name="Hayashizaki Y."/>
        </authorList>
    </citation>
    <scope>NUCLEOTIDE SEQUENCE [LARGE SCALE MRNA] (ISOFORMS 1 AND 2)</scope>
    <source>
        <strain>C57BL/6J</strain>
        <tissue>Liver</tissue>
        <tissue>Spinal ganglion</tissue>
        <tissue>Visual cortex</tissue>
    </source>
</reference>
<reference key="2">
    <citation type="journal article" date="2004" name="Genome Res.">
        <title>The status, quality, and expansion of the NIH full-length cDNA project: the Mammalian Gene Collection (MGC).</title>
        <authorList>
            <consortium name="The MGC Project Team"/>
        </authorList>
    </citation>
    <scope>NUCLEOTIDE SEQUENCE [LARGE SCALE MRNA] (ISOFORM 1)</scope>
    <source>
        <strain>Czech II</strain>
        <strain>FVB/N</strain>
        <tissue>Mammary tumor</tissue>
    </source>
</reference>
<reference key="3">
    <citation type="journal article" date="2010" name="Cell">
        <title>A tissue-specific atlas of mouse protein phosphorylation and expression.</title>
        <authorList>
            <person name="Huttlin E.L."/>
            <person name="Jedrychowski M.P."/>
            <person name="Elias J.E."/>
            <person name="Goswami T."/>
            <person name="Rad R."/>
            <person name="Beausoleil S.A."/>
            <person name="Villen J."/>
            <person name="Haas W."/>
            <person name="Sowa M.E."/>
            <person name="Gygi S.P."/>
        </authorList>
    </citation>
    <scope>IDENTIFICATION BY MASS SPECTROMETRY [LARGE SCALE ANALYSIS]</scope>
    <source>
        <tissue>Kidney</tissue>
        <tissue>Liver</tissue>
    </source>
</reference>
<reference key="4">
    <citation type="journal article" date="2012" name="Neuron">
        <title>Dystroglycan organizes axon guidance cue localization and axonal pathfinding.</title>
        <authorList>
            <person name="Wright K.M."/>
            <person name="Lyon K.A."/>
            <person name="Leung H."/>
            <person name="Leahy D.J."/>
            <person name="Ma L."/>
            <person name="Ginty D.D."/>
        </authorList>
    </citation>
    <scope>FUNCTION</scope>
    <scope>SUBCELLULAR LOCATION</scope>
    <scope>DISRUPTION PHENOTYPE</scope>
    <scope>MUTAGENESIS OF MET-155</scope>
    <scope>CATALYTIC ACTIVITY</scope>
</reference>
<reference key="5">
    <citation type="journal article" date="2014" name="Elife">
        <title>The glucuronyltransferase B4GAT1 is required for initiation of LARGE-mediated alpha-dystroglycan functional glycosylation.</title>
        <authorList>
            <person name="Willer T."/>
            <person name="Inamori K.I."/>
            <person name="Venzke D."/>
            <person name="Harvey C."/>
            <person name="Morgensen G."/>
            <person name="Hara Y."/>
            <person name="Beltran Valero de Bernabe D."/>
            <person name="Yu L."/>
            <person name="Wright K.M."/>
            <person name="Campbell K.P."/>
        </authorList>
    </citation>
    <scope>FUNCTION</scope>
    <scope>PATHWAY</scope>
    <scope>CATALYTIC ACTIVITY</scope>
</reference>
<sequence length="415" mass="47384">MQMSYAIRCAFYQLLLAALMLVAMLQLLYLSLLSGLHGQEEQEQYFEFFPPSPRSVDQVKSQLRTALASGGVLDASGDYRVYRGLLKTTMDPNDVILATHASVDNLLHLSGLLERWEGPLSVSVFAATKEEAQLATVLAYALSSHCPEMRARVAMHLVCPSRYEAAVPDPREPGEFALLRSCQEVFDKLARVAQPGINYALGTNTSYPNNLLRNLAREEANYALVIDVDMVPSEGLWRGLREMLDQSNHWDGTALVVPAFEIRRSRRMPMNKNELVQLYQVGEVRPFYYGLCTPCHAPTNYSRWVNLPEESLLRPAYVVPWRDPWEPFYVAGGKVPTFDERFRQYGFNRISQACELHVAGFNFEVLNEGFLVHKGFKEALKFHPQKEAENQRNKILYRQFKQELKARYPNSPHRC</sequence>
<evidence type="ECO:0000250" key="1">
    <source>
        <dbReference type="UniProtKB" id="O43505"/>
    </source>
</evidence>
<evidence type="ECO:0000255" key="2"/>
<evidence type="ECO:0000269" key="3">
    <source>
    </source>
</evidence>
<evidence type="ECO:0000269" key="4">
    <source>
    </source>
</evidence>
<evidence type="ECO:0000303" key="5">
    <source>
    </source>
</evidence>
<evidence type="ECO:0000305" key="6"/>
<dbReference type="EC" id="2.4.1.-" evidence="3 4"/>
<dbReference type="EMBL" id="AK050347">
    <property type="protein sequence ID" value="BAC34203.1"/>
    <property type="molecule type" value="mRNA"/>
</dbReference>
<dbReference type="EMBL" id="AK083857">
    <property type="protein sequence ID" value="BAC39041.1"/>
    <property type="molecule type" value="mRNA"/>
</dbReference>
<dbReference type="EMBL" id="AK158899">
    <property type="protein sequence ID" value="BAE34720.1"/>
    <property type="molecule type" value="mRNA"/>
</dbReference>
<dbReference type="EMBL" id="BC002191">
    <property type="protein sequence ID" value="AAH02191.1"/>
    <property type="molecule type" value="mRNA"/>
</dbReference>
<dbReference type="EMBL" id="BC069927">
    <property type="protein sequence ID" value="AAH69927.1"/>
    <property type="molecule type" value="mRNA"/>
</dbReference>
<dbReference type="CCDS" id="CCDS29446.1">
    <molecule id="Q8BWP8-1"/>
</dbReference>
<dbReference type="RefSeq" id="NP_780592.1">
    <molecule id="Q8BWP8-1"/>
    <property type="nucleotide sequence ID" value="NM_175383.2"/>
</dbReference>
<dbReference type="SMR" id="Q8BWP8"/>
<dbReference type="BioGRID" id="224461">
    <property type="interactions" value="1"/>
</dbReference>
<dbReference type="FunCoup" id="Q8BWP8">
    <property type="interactions" value="685"/>
</dbReference>
<dbReference type="STRING" id="10090.ENSMUSP00000062016"/>
<dbReference type="CAZy" id="GT49">
    <property type="family name" value="Glycosyltransferase Family 49"/>
</dbReference>
<dbReference type="GlyCosmos" id="Q8BWP8">
    <property type="glycosylation" value="2 sites, No reported glycans"/>
</dbReference>
<dbReference type="GlyGen" id="Q8BWP8">
    <property type="glycosylation" value="2 sites, 2 N-linked glycans (2 sites)"/>
</dbReference>
<dbReference type="iPTMnet" id="Q8BWP8"/>
<dbReference type="PhosphoSitePlus" id="Q8BWP8"/>
<dbReference type="SwissPalm" id="Q8BWP8"/>
<dbReference type="PaxDb" id="10090-ENSMUSP00000062016"/>
<dbReference type="PeptideAtlas" id="Q8BWP8"/>
<dbReference type="ProteomicsDB" id="273646">
    <molecule id="Q8BWP8-1"/>
</dbReference>
<dbReference type="ProteomicsDB" id="273647">
    <molecule id="Q8BWP8-2"/>
</dbReference>
<dbReference type="Pumba" id="Q8BWP8"/>
<dbReference type="DNASU" id="108902"/>
<dbReference type="Ensembl" id="ENSMUST00000053705.8">
    <molecule id="Q8BWP8-1"/>
    <property type="protein sequence ID" value="ENSMUSP00000062016.7"/>
    <property type="gene ID" value="ENSMUSG00000047379.8"/>
</dbReference>
<dbReference type="Ensembl" id="ENSMUST00000235776.2">
    <molecule id="Q8BWP8-2"/>
    <property type="protein sequence ID" value="ENSMUSP00000157645.2"/>
    <property type="gene ID" value="ENSMUSG00000047379.8"/>
</dbReference>
<dbReference type="Ensembl" id="ENSMUST00000236560.2">
    <molecule id="Q8BWP8-1"/>
    <property type="protein sequence ID" value="ENSMUSP00000158273.2"/>
    <property type="gene ID" value="ENSMUSG00000117789.2"/>
</dbReference>
<dbReference type="GeneID" id="108902"/>
<dbReference type="KEGG" id="mmu:108902"/>
<dbReference type="UCSC" id="uc008gbx.1">
    <molecule id="Q8BWP8-1"/>
    <property type="organism name" value="mouse"/>
</dbReference>
<dbReference type="AGR" id="MGI:1919680"/>
<dbReference type="AGR" id="MGI:6303291"/>
<dbReference type="CTD" id="11041"/>
<dbReference type="MGI" id="MGI:1919680">
    <property type="gene designation" value="B4gat1"/>
</dbReference>
<dbReference type="VEuPathDB" id="HostDB:ENSMUSG00000047379"/>
<dbReference type="VEuPathDB" id="HostDB:ENSMUSG00000117789"/>
<dbReference type="eggNOG" id="KOG3765">
    <property type="taxonomic scope" value="Eukaryota"/>
</dbReference>
<dbReference type="GeneTree" id="ENSGT00940000157679"/>
<dbReference type="HOGENOM" id="CLU_019238_5_0_1"/>
<dbReference type="InParanoid" id="Q8BWP8"/>
<dbReference type="OMA" id="SGQYRIY"/>
<dbReference type="OrthoDB" id="9974378at2759"/>
<dbReference type="PhylomeDB" id="Q8BWP8"/>
<dbReference type="TreeFam" id="TF319168"/>
<dbReference type="Reactome" id="R-MMU-2022854">
    <property type="pathway name" value="Keratan sulfate biosynthesis"/>
</dbReference>
<dbReference type="Reactome" id="R-MMU-5173105">
    <property type="pathway name" value="O-linked glycosylation"/>
</dbReference>
<dbReference type="UniPathway" id="UPA00378"/>
<dbReference type="BioGRID-ORCS" id="108902">
    <property type="hits" value="1 hit in 76 CRISPR screens"/>
</dbReference>
<dbReference type="ChiTaRS" id="B4gat1">
    <property type="organism name" value="mouse"/>
</dbReference>
<dbReference type="PRO" id="PR:Q8BWP8"/>
<dbReference type="Proteomes" id="UP000000589">
    <property type="component" value="Chromosome 19"/>
</dbReference>
<dbReference type="RNAct" id="Q8BWP8">
    <property type="molecule type" value="protein"/>
</dbReference>
<dbReference type="Bgee" id="ENSMUSG00000047379">
    <property type="expression patterns" value="Expressed in hypothalamus and 84 other cell types or tissues"/>
</dbReference>
<dbReference type="GO" id="GO:0005794">
    <property type="term" value="C:Golgi apparatus"/>
    <property type="evidence" value="ECO:0000250"/>
    <property type="project" value="UniProtKB"/>
</dbReference>
<dbReference type="GO" id="GO:0000139">
    <property type="term" value="C:Golgi membrane"/>
    <property type="evidence" value="ECO:0007669"/>
    <property type="project" value="UniProtKB-SubCell"/>
</dbReference>
<dbReference type="GO" id="GO:0015020">
    <property type="term" value="F:glucuronosyltransferase activity"/>
    <property type="evidence" value="ECO:0000250"/>
    <property type="project" value="UniProtKB"/>
</dbReference>
<dbReference type="GO" id="GO:0046872">
    <property type="term" value="F:metal ion binding"/>
    <property type="evidence" value="ECO:0007669"/>
    <property type="project" value="UniProtKB-KW"/>
</dbReference>
<dbReference type="GO" id="GO:0007411">
    <property type="term" value="P:axon guidance"/>
    <property type="evidence" value="ECO:0000315"/>
    <property type="project" value="MGI"/>
</dbReference>
<dbReference type="GO" id="GO:0006486">
    <property type="term" value="P:protein glycosylation"/>
    <property type="evidence" value="ECO:0000315"/>
    <property type="project" value="MGI"/>
</dbReference>
<dbReference type="GO" id="GO:0035269">
    <property type="term" value="P:protein O-linked mannosylation"/>
    <property type="evidence" value="ECO:0000250"/>
    <property type="project" value="UniProtKB"/>
</dbReference>
<dbReference type="InterPro" id="IPR043189">
    <property type="entry name" value="B4GAT1"/>
</dbReference>
<dbReference type="PANTHER" id="PTHR46420">
    <property type="entry name" value="BETA-1,4-GLUCURONYLTRANSFERASE 1"/>
    <property type="match status" value="1"/>
</dbReference>
<dbReference type="PANTHER" id="PTHR46420:SF1">
    <property type="entry name" value="BETA-1,4-GLUCURONYLTRANSFERASE 1"/>
    <property type="match status" value="1"/>
</dbReference>
<dbReference type="Pfam" id="PF13896">
    <property type="entry name" value="Glyco_transf_49"/>
    <property type="match status" value="1"/>
</dbReference>
<gene>
    <name evidence="1" type="primary">B4gat1</name>
    <name type="synonym">B3gnt1</name>
    <name type="synonym">B3gnt6</name>
</gene>
<name>B4GA1_MOUSE</name>
<protein>
    <recommendedName>
        <fullName evidence="1">Beta-1,4-glucuronyltransferase 1</fullName>
        <ecNumber evidence="3 4">2.4.1.-</ecNumber>
    </recommendedName>
    <alternativeName>
        <fullName>I-beta-1,3-N-acetylglucosaminyltransferase</fullName>
        <shortName>iGnT</shortName>
    </alternativeName>
    <alternativeName>
        <fullName>N-acetyllactosaminide beta-1,3-N-acetylglucosaminyltransferase</fullName>
    </alternativeName>
    <alternativeName>
        <fullName>Poly-N-acetyllactosamine extension enzyme</fullName>
    </alternativeName>
    <alternativeName>
        <fullName>UDP-GlcNAc:betaGal beta-1,3-N-acetylglucosaminyltransferase 1</fullName>
    </alternativeName>
</protein>
<proteinExistence type="evidence at protein level"/>
<comment type="function">
    <text evidence="3 4">Beta-1,4-glucuronyltransferase involved in O-mannosylation of alpha-dystroglycan (DAG1) (PubMed:23217742, PubMed:25279699). Transfers a glucuronic acid (GlcA) residue onto a xylose (Xyl) acceptor to produce the glucuronyl-beta-1,4-xylose-beta disaccharide primer, which is further elongated by LARGE1, during synthesis of phosphorylated O-mannosyl glycan (PubMed:25279699). Phosphorylated O-mannosyl glycan is a carbohydrate structure present in alpha-dystroglycan (DAG1), which is required for binding laminin G-like domain-containing extracellular proteins with high affinity (PubMed:25279699). Required for axon guidance; via its function in O-mannosylation of alpha-dystroglycan (DAG1) (PubMed:23217742).</text>
</comment>
<comment type="catalytic activity">
    <reaction evidence="3 4">
        <text>3-O-[beta-D-Xyl-(1-&gt;4)-Rib-ol-P-Rib-ol-P-3-beta-D-GalNAc-(1-&gt;3)-beta-D-GlcNAc-(1-&gt;4)-(O-6-P-alpha-D-Man)]-Thr-[protein] + UDP-alpha-D-glucuronate = 3-O-[beta-D-GlcA-(1-&gt;3)-beta-D-Xyl-(1-&gt;4)-Rib-ol-P-Rib-ol-P-3-beta-D-GalNAc-(1-&gt;3)-beta-D-GlcNAc-(1-&gt;4)-(O-6-P-alpha-D-Man)]-Thr-[protein] + UDP + H(+)</text>
        <dbReference type="Rhea" id="RHEA:46860"/>
        <dbReference type="Rhea" id="RHEA-COMP:15023"/>
        <dbReference type="Rhea" id="RHEA-COMP:17482"/>
        <dbReference type="ChEBI" id="CHEBI:15378"/>
        <dbReference type="ChEBI" id="CHEBI:58052"/>
        <dbReference type="ChEBI" id="CHEBI:58223"/>
        <dbReference type="ChEBI" id="CHEBI:142405"/>
        <dbReference type="ChEBI" id="CHEBI:177336"/>
    </reaction>
</comment>
<comment type="cofactor">
    <cofactor evidence="1">
        <name>Mn(2+)</name>
        <dbReference type="ChEBI" id="CHEBI:29035"/>
    </cofactor>
</comment>
<comment type="pathway">
    <text evidence="4">Protein modification; protein glycosylation.</text>
</comment>
<comment type="subunit">
    <text evidence="1">Interacts with LARGE1 and LARGE2.</text>
</comment>
<comment type="subcellular location">
    <subcellularLocation>
        <location evidence="3">Golgi apparatus membrane</location>
        <topology>Single-pass type II membrane protein</topology>
    </subcellularLocation>
    <text evidence="1">Localizes near the trans-Golgi apparatus.</text>
</comment>
<comment type="alternative products">
    <event type="alternative splicing"/>
    <isoform>
        <id>Q8BWP8-1</id>
        <name>1</name>
        <sequence type="displayed"/>
    </isoform>
    <isoform>
        <id>Q8BWP8-2</id>
        <name>2</name>
        <sequence type="described" ref="VSP_014004 VSP_014005"/>
    </isoform>
</comment>
<comment type="disruption phenotype">
    <text evidence="3">Early embryonic lethality.</text>
</comment>
<comment type="similarity">
    <text evidence="6">Belongs to the glycosyltransferase 49 family.</text>
</comment>
<organism>
    <name type="scientific">Mus musculus</name>
    <name type="common">Mouse</name>
    <dbReference type="NCBI Taxonomy" id="10090"/>
    <lineage>
        <taxon>Eukaryota</taxon>
        <taxon>Metazoa</taxon>
        <taxon>Chordata</taxon>
        <taxon>Craniata</taxon>
        <taxon>Vertebrata</taxon>
        <taxon>Euteleostomi</taxon>
        <taxon>Mammalia</taxon>
        <taxon>Eutheria</taxon>
        <taxon>Euarchontoglires</taxon>
        <taxon>Glires</taxon>
        <taxon>Rodentia</taxon>
        <taxon>Myomorpha</taxon>
        <taxon>Muroidea</taxon>
        <taxon>Muridae</taxon>
        <taxon>Murinae</taxon>
        <taxon>Mus</taxon>
        <taxon>Mus</taxon>
    </lineage>
</organism>
<keyword id="KW-0025">Alternative splicing</keyword>
<keyword id="KW-0325">Glycoprotein</keyword>
<keyword id="KW-0328">Glycosyltransferase</keyword>
<keyword id="KW-0333">Golgi apparatus</keyword>
<keyword id="KW-0464">Manganese</keyword>
<keyword id="KW-0472">Membrane</keyword>
<keyword id="KW-0479">Metal-binding</keyword>
<keyword id="KW-1185">Reference proteome</keyword>
<keyword id="KW-0735">Signal-anchor</keyword>
<keyword id="KW-0808">Transferase</keyword>
<keyword id="KW-0812">Transmembrane</keyword>
<keyword id="KW-1133">Transmembrane helix</keyword>